<dbReference type="EC" id="3.4.24.-" evidence="7"/>
<dbReference type="EMBL" id="CP001234">
    <property type="protein sequence ID" value="ACP07198.1"/>
    <property type="molecule type" value="Genomic_DNA"/>
</dbReference>
<dbReference type="RefSeq" id="WP_000848953.1">
    <property type="nucleotide sequence ID" value="NC_012580.1"/>
</dbReference>
<dbReference type="PDB" id="4L9D">
    <property type="method" value="X-ray"/>
    <property type="resolution" value="1.10 A"/>
    <property type="chains" value="A/B=755-839"/>
</dbReference>
<dbReference type="PDBsum" id="4L9D"/>
<dbReference type="SMR" id="C3LUP3"/>
<dbReference type="MEROPS" id="M06.002"/>
<dbReference type="KEGG" id="vcm:VCM66_A0219"/>
<dbReference type="HOGENOM" id="CLU_010858_1_0_6"/>
<dbReference type="EvolutionaryTrace" id="C3LUP3"/>
<dbReference type="Proteomes" id="UP000001217">
    <property type="component" value="Chromosome II"/>
</dbReference>
<dbReference type="GO" id="GO:0005576">
    <property type="term" value="C:extracellular region"/>
    <property type="evidence" value="ECO:0007669"/>
    <property type="project" value="UniProtKB-SubCell"/>
</dbReference>
<dbReference type="GO" id="GO:0046872">
    <property type="term" value="F:metal ion binding"/>
    <property type="evidence" value="ECO:0007669"/>
    <property type="project" value="UniProtKB-KW"/>
</dbReference>
<dbReference type="GO" id="GO:0008237">
    <property type="term" value="F:metallopeptidase activity"/>
    <property type="evidence" value="ECO:0007669"/>
    <property type="project" value="UniProtKB-KW"/>
</dbReference>
<dbReference type="GO" id="GO:0031640">
    <property type="term" value="P:killing of cells of another organism"/>
    <property type="evidence" value="ECO:0007669"/>
    <property type="project" value="UniProtKB-KW"/>
</dbReference>
<dbReference type="GO" id="GO:0006508">
    <property type="term" value="P:proteolysis"/>
    <property type="evidence" value="ECO:0007669"/>
    <property type="project" value="UniProtKB-KW"/>
</dbReference>
<dbReference type="CDD" id="cd00146">
    <property type="entry name" value="PKD"/>
    <property type="match status" value="2"/>
</dbReference>
<dbReference type="Gene3D" id="2.60.40.10">
    <property type="entry name" value="Immunoglobulins"/>
    <property type="match status" value="2"/>
</dbReference>
<dbReference type="InterPro" id="IPR013783">
    <property type="entry name" value="Ig-like_fold"/>
</dbReference>
<dbReference type="InterPro" id="IPR048665">
    <property type="entry name" value="InhA-like_VEG"/>
</dbReference>
<dbReference type="InterPro" id="IPR012300">
    <property type="entry name" value="Pept_M6_InhA"/>
</dbReference>
<dbReference type="InterPro" id="IPR008757">
    <property type="entry name" value="Peptidase_M6-like_domain"/>
</dbReference>
<dbReference type="InterPro" id="IPR022409">
    <property type="entry name" value="PKD/Chitinase_dom"/>
</dbReference>
<dbReference type="InterPro" id="IPR000601">
    <property type="entry name" value="PKD_dom"/>
</dbReference>
<dbReference type="InterPro" id="IPR035986">
    <property type="entry name" value="PKD_dom_sf"/>
</dbReference>
<dbReference type="NCBIfam" id="TIGR03296">
    <property type="entry name" value="M6dom_TIGR03296"/>
    <property type="match status" value="1"/>
</dbReference>
<dbReference type="PANTHER" id="PTHR13062:SF12">
    <property type="entry name" value="ALPHA-2-MACROGLOBULIN DOMAIN-CONTAINING PROTEIN"/>
    <property type="match status" value="1"/>
</dbReference>
<dbReference type="PANTHER" id="PTHR13062">
    <property type="entry name" value="COLLAGENASE"/>
    <property type="match status" value="1"/>
</dbReference>
<dbReference type="Pfam" id="PF20773">
    <property type="entry name" value="InhA-like_MAM"/>
    <property type="match status" value="1"/>
</dbReference>
<dbReference type="Pfam" id="PF20774">
    <property type="entry name" value="InhA-like_VEG"/>
    <property type="match status" value="1"/>
</dbReference>
<dbReference type="Pfam" id="PF05547">
    <property type="entry name" value="Peptidase_M6"/>
    <property type="match status" value="1"/>
</dbReference>
<dbReference type="Pfam" id="PF00801">
    <property type="entry name" value="PKD"/>
    <property type="match status" value="1"/>
</dbReference>
<dbReference type="Pfam" id="PF18911">
    <property type="entry name" value="PKD_4"/>
    <property type="match status" value="1"/>
</dbReference>
<dbReference type="PIRSF" id="PIRSF007519">
    <property type="entry name" value="Protease_InhA"/>
    <property type="match status" value="1"/>
</dbReference>
<dbReference type="SMART" id="SM00089">
    <property type="entry name" value="PKD"/>
    <property type="match status" value="2"/>
</dbReference>
<dbReference type="SUPFAM" id="SSF55486">
    <property type="entry name" value="Metalloproteases ('zincins'), catalytic domain"/>
    <property type="match status" value="1"/>
</dbReference>
<dbReference type="SUPFAM" id="SSF49299">
    <property type="entry name" value="PKD domain"/>
    <property type="match status" value="2"/>
</dbReference>
<dbReference type="PROSITE" id="PS50093">
    <property type="entry name" value="PKD"/>
    <property type="match status" value="1"/>
</dbReference>
<keyword id="KW-0002">3D-structure</keyword>
<keyword id="KW-0068">Autocatalytic cleavage</keyword>
<keyword id="KW-0106">Calcium</keyword>
<keyword id="KW-0204">Cytolysis</keyword>
<keyword id="KW-0378">Hydrolase</keyword>
<keyword id="KW-0479">Metal-binding</keyword>
<keyword id="KW-0482">Metalloprotease</keyword>
<keyword id="KW-0645">Protease</keyword>
<keyword id="KW-0677">Repeat</keyword>
<keyword id="KW-0964">Secreted</keyword>
<keyword id="KW-0732">Signal</keyword>
<keyword id="KW-0843">Virulence</keyword>
<keyword id="KW-0862">Zinc</keyword>
<proteinExistence type="evidence at protein level"/>
<accession>C3LUP3</accession>
<protein>
    <recommendedName>
        <fullName evidence="6">Pre-pro-metalloprotease PrtV</fullName>
        <ecNumber evidence="7">3.4.24.-</ecNumber>
    </recommendedName>
    <component>
        <recommendedName>
            <fullName evidence="1">Pro-metalloprotease PrtV</fullName>
        </recommendedName>
    </component>
    <component>
        <recommendedName>
            <fullName evidence="1">37 kDa metalloprotease PrtV</fullName>
        </recommendedName>
    </component>
    <component>
        <recommendedName>
            <fullName evidence="1">18 kDa metalloprotease PrtV</fullName>
        </recommendedName>
    </component>
</protein>
<organism>
    <name type="scientific">Vibrio cholerae serotype O1 (strain M66-2)</name>
    <dbReference type="NCBI Taxonomy" id="579112"/>
    <lineage>
        <taxon>Bacteria</taxon>
        <taxon>Pseudomonadati</taxon>
        <taxon>Pseudomonadota</taxon>
        <taxon>Gammaproteobacteria</taxon>
        <taxon>Vibrionales</taxon>
        <taxon>Vibrionaceae</taxon>
        <taxon>Vibrio</taxon>
    </lineage>
</organism>
<feature type="signal peptide" evidence="2">
    <location>
        <begin position="1"/>
        <end position="23"/>
    </location>
</feature>
<feature type="propeptide" id="PRO_0000440249" evidence="1">
    <location>
        <begin position="24"/>
        <end position="105"/>
    </location>
</feature>
<feature type="chain" id="PRO_5002927614" description="Pro-metalloprotease PrtV">
    <location>
        <begin position="106"/>
        <end position="834"/>
    </location>
</feature>
<feature type="chain" id="PRO_0000440250" description="37 kDa metalloprotease PrtV" evidence="1">
    <location>
        <begin position="106"/>
        <end position="434"/>
    </location>
</feature>
<feature type="chain" id="PRO_0000440251" description="18 kDa metalloprotease PrtV" evidence="1">
    <location>
        <begin position="587"/>
        <end position="749"/>
    </location>
</feature>
<feature type="propeptide" id="PRO_0000440252" evidence="1">
    <location>
        <begin position="835"/>
        <end position="918"/>
    </location>
</feature>
<feature type="domain" description="PKD 1" evidence="3">
    <location>
        <begin position="758"/>
        <end position="835"/>
    </location>
</feature>
<feature type="domain" description="PKD 2" evidence="3">
    <location>
        <begin position="855"/>
        <end position="918"/>
    </location>
</feature>
<feature type="active site" evidence="4">
    <location>
        <position position="331"/>
    </location>
</feature>
<feature type="binding site" evidence="4">
    <location>
        <position position="330"/>
    </location>
    <ligand>
        <name>Zn(2+)</name>
        <dbReference type="ChEBI" id="CHEBI:29105"/>
        <note>catalytic</note>
    </ligand>
</feature>
<feature type="binding site" evidence="4">
    <location>
        <position position="334"/>
    </location>
    <ligand>
        <name>Zn(2+)</name>
        <dbReference type="ChEBI" id="CHEBI:29105"/>
        <note>catalytic</note>
    </ligand>
</feature>
<feature type="binding site" evidence="5">
    <location>
        <position position="757"/>
    </location>
    <ligand>
        <name>Ca(2+)</name>
        <dbReference type="ChEBI" id="CHEBI:29108"/>
    </ligand>
</feature>
<feature type="binding site" evidence="5">
    <location>
        <position position="782"/>
    </location>
    <ligand>
        <name>Ca(2+)</name>
        <dbReference type="ChEBI" id="CHEBI:29108"/>
    </ligand>
</feature>
<feature type="binding site" evidence="5">
    <location>
        <position position="821"/>
    </location>
    <ligand>
        <name>Ca(2+)</name>
        <dbReference type="ChEBI" id="CHEBI:29108"/>
    </ligand>
</feature>
<feature type="binding site" evidence="5">
    <location>
        <position position="825"/>
    </location>
    <ligand>
        <name>Ca(2+)</name>
        <dbReference type="ChEBI" id="CHEBI:29108"/>
    </ligand>
</feature>
<feature type="strand" evidence="10">
    <location>
        <begin position="763"/>
        <end position="768"/>
    </location>
</feature>
<feature type="strand" evidence="10">
    <location>
        <begin position="771"/>
        <end position="776"/>
    </location>
</feature>
<feature type="strand" evidence="10">
    <location>
        <begin position="781"/>
        <end position="783"/>
    </location>
</feature>
<feature type="strand" evidence="10">
    <location>
        <begin position="785"/>
        <end position="791"/>
    </location>
</feature>
<feature type="strand" evidence="10">
    <location>
        <begin position="793"/>
        <end position="795"/>
    </location>
</feature>
<feature type="strand" evidence="10">
    <location>
        <begin position="800"/>
        <end position="802"/>
    </location>
</feature>
<feature type="strand" evidence="10">
    <location>
        <begin position="804"/>
        <end position="806"/>
    </location>
</feature>
<feature type="strand" evidence="10">
    <location>
        <begin position="811"/>
        <end position="821"/>
    </location>
</feature>
<feature type="strand" evidence="10">
    <location>
        <begin position="826"/>
        <end position="835"/>
    </location>
</feature>
<evidence type="ECO:0000250" key="1">
    <source>
        <dbReference type="UniProtKB" id="Q9KMU6"/>
    </source>
</evidence>
<evidence type="ECO:0000255" key="2"/>
<evidence type="ECO:0000255" key="3">
    <source>
        <dbReference type="PROSITE-ProRule" id="PRU00151"/>
    </source>
</evidence>
<evidence type="ECO:0000255" key="4">
    <source>
        <dbReference type="PROSITE-ProRule" id="PRU10095"/>
    </source>
</evidence>
<evidence type="ECO:0000269" key="5">
    <source>
    </source>
</evidence>
<evidence type="ECO:0000303" key="6">
    <source>
    </source>
</evidence>
<evidence type="ECO:0000305" key="7"/>
<evidence type="ECO:0000312" key="8">
    <source>
        <dbReference type="EMBL" id="ACP07198.1"/>
    </source>
</evidence>
<evidence type="ECO:0000312" key="9">
    <source>
        <dbReference type="Proteomes" id="UP000001217"/>
    </source>
</evidence>
<evidence type="ECO:0007829" key="10">
    <source>
        <dbReference type="PDB" id="4L9D"/>
    </source>
</evidence>
<reference key="1">
    <citation type="journal article" date="2008" name="PLoS ONE">
        <title>A recalibrated molecular clock and independent origins for the cholera pandemic clones.</title>
        <authorList>
            <person name="Feng L."/>
            <person name="Reeves P.R."/>
            <person name="Lan R."/>
            <person name="Ren Y."/>
            <person name="Gao C."/>
            <person name="Zhou Z."/>
            <person name="Ren Y."/>
            <person name="Cheng J."/>
            <person name="Wang W."/>
            <person name="Wang J."/>
            <person name="Qian W."/>
            <person name="Li D."/>
            <person name="Wang L."/>
        </authorList>
    </citation>
    <scope>NUCLEOTIDE SEQUENCE [LARGE SCALE GENOMIC DNA]</scope>
    <source>
        <strain evidence="8 9">M66-2</strain>
    </source>
</reference>
<reference key="2">
    <citation type="journal article" date="2013" name="FEBS Open Bio">
        <title>Calcium binding by the PKD1 domain regulates interdomain flexibility in Vibrio cholerae metalloprotease PrtV.</title>
        <authorList>
            <person name="Edwin A."/>
            <person name="Rompikuntal P."/>
            <person name="Bjorn E."/>
            <person name="Stier G."/>
            <person name="Wai S.N."/>
            <person name="Sauer-Eriksson A.E."/>
        </authorList>
    </citation>
    <scope>X-RAY CRYSTALLOGRAPHY (1.10 ANGSTROMS) OF 755-839 IN COMPLEX WITH CALCIUM ION</scope>
</reference>
<name>PRTV_VIBCM</name>
<comment type="function">
    <text evidence="1">Metalloprotease that exhibits a cytotoxic effect leading to cell death. In host tissues, it could play a role in pathogenesis by modulating the stability of the extracellular matrix components such as fibronectin and fibrinogen. Also able to cleave plasminogen.</text>
</comment>
<comment type="cofactor">
    <cofactor evidence="1">
        <name>Zn(2+)</name>
        <dbReference type="ChEBI" id="CHEBI:29105"/>
    </cofactor>
</comment>
<comment type="activity regulation">
    <text evidence="1">Calcium plays an important structural role, providing stability to this protein in the cytoplasm. Outside the cell, the decrease of the calcium concentration triggers the autoproteolysis.</text>
</comment>
<comment type="subcellular location">
    <subcellularLocation>
        <location evidence="1">Secreted</location>
    </subcellularLocation>
</comment>
<comment type="PTM">
    <text evidence="1">PrtV is expressed as an inactive, multidomain, 102 kDa pre-pro-metalloprotease. To form a catalytically active protease, PrtV is first secreted, and then it undergoes N- and C-terminal cleavages during envelope translocation to yield a 81 kDa pro-metalloprotease. Outside the cell, the 81 kDa pro-metalloprotease undergoes an auto-cleavage. The two major products of autoproteolysis (37 kDa and 18 kDa) together form the so called 55 kDa active complex.</text>
</comment>
<comment type="similarity">
    <text evidence="7">Belongs to the peptidase M6 family.</text>
</comment>
<sequence>MKTIKKTLLAAAIASFFSSGLYAQTPIDLGVVNEDKLIEMLVRTGQIPADASDVDKRIALERYLEEKIRSGFKGDAQFGKKALEQRAKILKVIDKQKGPHKARVFALDVGQKRTDKVLALLIDFPDLPWDDNRLTKEHTEMLYDRYEPSHYQDLLFSDKGYTGPNGENFISMRQYYESESGNSYSVSGQAAGWYRASKNAAYYGGNSPGTNNDMNARELVREALDQLARDPNINLADYDIEDRYDYNGNGNFREPDGVIDHLMIFHASVGEEAGGGVLGADAIWSHRFNLGRYHVLEGTKSNVPGRFNGQFAAFDYTIQPIDAAAGVCAHEYGHDLGLPDEYDTQYTGTGEPVSYWSIMSSGSWAGKIGGTQPTAFSSWAKQFLQNSIGGRWINHEQLSINELEAKPRVVTLFQTTDNSRPNMVKVTLPMKRVEGIKPAEGEFSFYSNRGDDLKNRMSRPLTIPAGSQATLRFKAWFQIEKDYDYARVLINGKPIAGNITTMDDPFKSGLVPAISGQSDGWVDAQFDLSAWAGQTVELAFDYLTDGGLAMEGLYVDDLRLEVDGNQTLIDNAEGTSSFAFQGFTKNGGFHEANHYYLLQWRSHNDVDQGLANLKRFGQLMSFEPGLLVWYVDESYADNWVGKHPGEGWLGVVDADQNALVWSKTGEVAQTRFQVRDATFSLFDQAPLKLVTADGNTLEDMNLTANASFSDDQDYSSPQAPDSGRKVMPFGLKIDLLSQSKENEYGVVRLSKVTTENIAPVARFELKVEGLSVMSQNTSSDSDGNIVSYLWDFGNGQTSTEAAPTWSYTKAGSYSVTLTVTDDKGDSDTHQQTIKVDTPNALPQASANYIHLGRWVTMWSTSTDSDGRIVDTEWTLPNGKIKRGRMFTAIFPSYGHHDVQLKVMDDRGAVTTITIKVKL</sequence>
<gene>
    <name evidence="8" type="primary">prtV</name>
    <name evidence="8" type="ordered locus">VCM66_A0219</name>
</gene>